<geneLocation type="plasmid">
    <name>IncI1 ColIb</name>
</geneLocation>
<comment type="function">
    <text>ABI may interact with a target in the cell membrane, which could be the product of the host's cmrA gene, and cause disruption of the cellular membrane such that lysis of the infected cell and death of the infecting phage would result.</text>
</comment>
<comment type="subcellular location">
    <subcellularLocation>
        <location>Cell membrane</location>
    </subcellularLocation>
    <text>This very hydrophobic protein could insert itself into membranes.</text>
</comment>
<comment type="miscellaneous">
    <text>When phage T5 or its close relative BF23, infects cells harboring a ColIb plasmid, the infection is abortive. The mechanism involves gene products from the phage, the ColIb plasmid, and the host.</text>
</comment>
<sequence>MTKIKTVTFVNTYPGGSMKNLLDTEGTVLFPFQTEIHFIWTIFSTVKRLVIGTRDHICQKQYWSACLCILLLMAYVGLCAAVVWFVVPC</sequence>
<proteinExistence type="predicted"/>
<protein>
    <recommendedName>
        <fullName>Abortive infection protein</fullName>
    </recommendedName>
</protein>
<reference key="1">
    <citation type="journal article" date="1988" name="Plasmid">
        <title>Nucleotide sequence of a DNA fragment that contains the abi gene of the ColIb plasmid.</title>
        <authorList>
            <person name="Gupta S.K."/>
            <person name="McCorquodale D.J."/>
        </authorList>
    </citation>
    <scope>NUCLEOTIDE SEQUENCE [GENOMIC DNA]</scope>
</reference>
<dbReference type="EMBL" id="J03314">
    <property type="protein sequence ID" value="AAA23185.1"/>
    <property type="molecule type" value="Genomic_DNA"/>
</dbReference>
<dbReference type="EMBL" id="M36875">
    <property type="protein sequence ID" value="AAA23186.1"/>
    <property type="molecule type" value="Genomic_DNA"/>
</dbReference>
<dbReference type="PIR" id="I40752">
    <property type="entry name" value="I40752"/>
</dbReference>
<dbReference type="SMR" id="P18024"/>
<dbReference type="GO" id="GO:0005886">
    <property type="term" value="C:plasma membrane"/>
    <property type="evidence" value="ECO:0007669"/>
    <property type="project" value="UniProtKB-SubCell"/>
</dbReference>
<organism>
    <name type="scientific">Escherichia coli</name>
    <dbReference type="NCBI Taxonomy" id="562"/>
    <lineage>
        <taxon>Bacteria</taxon>
        <taxon>Pseudomonadati</taxon>
        <taxon>Pseudomonadota</taxon>
        <taxon>Gammaproteobacteria</taxon>
        <taxon>Enterobacterales</taxon>
        <taxon>Enterobacteriaceae</taxon>
        <taxon>Escherichia</taxon>
    </lineage>
</organism>
<feature type="chain" id="PRO_0000068346" description="Abortive infection protein">
    <location>
        <begin position="1"/>
        <end position="89"/>
    </location>
</feature>
<gene>
    <name type="primary">abi</name>
</gene>
<accession>P18024</accession>
<name>ABI_ECOLX</name>
<keyword id="KW-1003">Cell membrane</keyword>
<keyword id="KW-0472">Membrane</keyword>
<keyword id="KW-0614">Plasmid</keyword>